<dbReference type="EMBL" id="AJ271079">
    <property type="protein sequence ID" value="CAB67192.2"/>
    <property type="molecule type" value="Genomic_DNA"/>
</dbReference>
<dbReference type="RefSeq" id="NP_084726.2">
    <property type="nucleotide sequence ID" value="NC_002693.2"/>
</dbReference>
<dbReference type="SMR" id="Q9MTJ2"/>
<dbReference type="GeneID" id="802799"/>
<dbReference type="GO" id="GO:0009507">
    <property type="term" value="C:chloroplast"/>
    <property type="evidence" value="ECO:0007669"/>
    <property type="project" value="UniProtKB-SubCell"/>
</dbReference>
<dbReference type="GO" id="GO:1990904">
    <property type="term" value="C:ribonucleoprotein complex"/>
    <property type="evidence" value="ECO:0007669"/>
    <property type="project" value="UniProtKB-KW"/>
</dbReference>
<dbReference type="GO" id="GO:0005840">
    <property type="term" value="C:ribosome"/>
    <property type="evidence" value="ECO:0007669"/>
    <property type="project" value="UniProtKB-KW"/>
</dbReference>
<dbReference type="GO" id="GO:0019843">
    <property type="term" value="F:rRNA binding"/>
    <property type="evidence" value="ECO:0007669"/>
    <property type="project" value="UniProtKB-UniRule"/>
</dbReference>
<dbReference type="GO" id="GO:0003735">
    <property type="term" value="F:structural constituent of ribosome"/>
    <property type="evidence" value="ECO:0007669"/>
    <property type="project" value="InterPro"/>
</dbReference>
<dbReference type="GO" id="GO:0006412">
    <property type="term" value="P:translation"/>
    <property type="evidence" value="ECO:0007669"/>
    <property type="project" value="UniProtKB-UniRule"/>
</dbReference>
<dbReference type="FunFam" id="3.30.420.80:FF:000003">
    <property type="entry name" value="30S ribosomal protein S11, chloroplastic"/>
    <property type="match status" value="1"/>
</dbReference>
<dbReference type="Gene3D" id="3.30.420.80">
    <property type="entry name" value="Ribosomal protein S11"/>
    <property type="match status" value="1"/>
</dbReference>
<dbReference type="HAMAP" id="MF_01310">
    <property type="entry name" value="Ribosomal_uS11"/>
    <property type="match status" value="1"/>
</dbReference>
<dbReference type="InterPro" id="IPR001971">
    <property type="entry name" value="Ribosomal_uS11"/>
</dbReference>
<dbReference type="InterPro" id="IPR019981">
    <property type="entry name" value="Ribosomal_uS11_bac-type"/>
</dbReference>
<dbReference type="InterPro" id="IPR018102">
    <property type="entry name" value="Ribosomal_uS11_CS"/>
</dbReference>
<dbReference type="InterPro" id="IPR036967">
    <property type="entry name" value="Ribosomal_uS11_sf"/>
</dbReference>
<dbReference type="NCBIfam" id="NF003698">
    <property type="entry name" value="PRK05309.1"/>
    <property type="match status" value="1"/>
</dbReference>
<dbReference type="NCBIfam" id="TIGR03632">
    <property type="entry name" value="uS11_bact"/>
    <property type="match status" value="1"/>
</dbReference>
<dbReference type="PANTHER" id="PTHR11759">
    <property type="entry name" value="40S RIBOSOMAL PROTEIN S14/30S RIBOSOMAL PROTEIN S11"/>
    <property type="match status" value="1"/>
</dbReference>
<dbReference type="Pfam" id="PF00411">
    <property type="entry name" value="Ribosomal_S11"/>
    <property type="match status" value="1"/>
</dbReference>
<dbReference type="PIRSF" id="PIRSF002131">
    <property type="entry name" value="Ribosomal_S11"/>
    <property type="match status" value="1"/>
</dbReference>
<dbReference type="SUPFAM" id="SSF53137">
    <property type="entry name" value="Translational machinery components"/>
    <property type="match status" value="1"/>
</dbReference>
<dbReference type="PROSITE" id="PS00054">
    <property type="entry name" value="RIBOSOMAL_S11"/>
    <property type="match status" value="1"/>
</dbReference>
<sequence>MAKSIPSAGLRLRLRLRRNARRRSRKSTRKIPKGVIHVQASFHNTIVTVTDVRGRVISWSSAGTCGFKSTRKGTPFAAQTAAGDAIRPVVDQGMQRAEVRIKGPGLGRDAALRAIRRSGIRLSCIRDVTPLPHNGCRPPKKRRV</sequence>
<organism>
    <name type="scientific">Oenothera elata subsp. hookeri</name>
    <name type="common">Hooker's evening primrose</name>
    <name type="synonym">Oenothera hookeri</name>
    <dbReference type="NCBI Taxonomy" id="85636"/>
    <lineage>
        <taxon>Eukaryota</taxon>
        <taxon>Viridiplantae</taxon>
        <taxon>Streptophyta</taxon>
        <taxon>Embryophyta</taxon>
        <taxon>Tracheophyta</taxon>
        <taxon>Spermatophyta</taxon>
        <taxon>Magnoliopsida</taxon>
        <taxon>eudicotyledons</taxon>
        <taxon>Gunneridae</taxon>
        <taxon>Pentapetalae</taxon>
        <taxon>rosids</taxon>
        <taxon>malvids</taxon>
        <taxon>Myrtales</taxon>
        <taxon>Onagraceae</taxon>
        <taxon>Onagroideae</taxon>
        <taxon>Onagreae</taxon>
        <taxon>Oenothera</taxon>
    </lineage>
</organism>
<evidence type="ECO:0000255" key="1">
    <source>
        <dbReference type="HAMAP-Rule" id="MF_01310"/>
    </source>
</evidence>
<evidence type="ECO:0000305" key="2"/>
<proteinExistence type="inferred from homology"/>
<feature type="chain" id="PRO_0000123313" description="Small ribosomal subunit protein uS11c">
    <location>
        <begin position="1"/>
        <end position="144"/>
    </location>
</feature>
<gene>
    <name evidence="1" type="primary">rps11</name>
</gene>
<reference key="1">
    <citation type="journal article" date="2000" name="Mol. Gen. Genet.">
        <title>Complete nucleotide sequence of the Oenothera elata plastid chromosome, representing plastome I of the five distinguishable Euoenothera plastomes.</title>
        <authorList>
            <person name="Hupfer H."/>
            <person name="Swiatek M."/>
            <person name="Hornung S."/>
            <person name="Herrmann R.G."/>
            <person name="Maier R.M."/>
            <person name="Chiu W.-L."/>
            <person name="Sears B."/>
        </authorList>
    </citation>
    <scope>NUCLEOTIDE SEQUENCE [LARGE SCALE GENOMIC DNA]</scope>
    <source>
        <strain>cv. Johansen</strain>
    </source>
</reference>
<reference key="2">
    <citation type="journal article" date="2008" name="Nucleic Acids Res.">
        <title>The complete nucleotide sequences of the five genetically distinct plastid genomes of Oenothera, subsection Oenothera: I. Sequence evaluation and plastome evolution.</title>
        <authorList>
            <person name="Greiner S."/>
            <person name="Wang X."/>
            <person name="Rauwolf U."/>
            <person name="Silber M.V."/>
            <person name="Mayer K."/>
            <person name="Meurer J."/>
            <person name="Haberer G."/>
            <person name="Herrmann R.G."/>
        </authorList>
    </citation>
    <scope>SEQUENCE REVISION TO 137</scope>
</reference>
<name>RR11_OENEH</name>
<accession>Q9MTJ2</accession>
<comment type="subunit">
    <text evidence="1">Part of the 30S ribosomal subunit.</text>
</comment>
<comment type="subcellular location">
    <subcellularLocation>
        <location>Plastid</location>
        <location>Chloroplast</location>
    </subcellularLocation>
</comment>
<comment type="similarity">
    <text evidence="1">Belongs to the universal ribosomal protein uS11 family.</text>
</comment>
<keyword id="KW-0150">Chloroplast</keyword>
<keyword id="KW-0934">Plastid</keyword>
<keyword id="KW-0687">Ribonucleoprotein</keyword>
<keyword id="KW-0689">Ribosomal protein</keyword>
<keyword id="KW-0694">RNA-binding</keyword>
<keyword id="KW-0699">rRNA-binding</keyword>
<geneLocation type="chloroplast"/>
<protein>
    <recommendedName>
        <fullName evidence="1">Small ribosomal subunit protein uS11c</fullName>
    </recommendedName>
    <alternativeName>
        <fullName evidence="2">30S ribosomal protein S11, chloroplastic</fullName>
    </alternativeName>
</protein>